<accession>Q8S5M8</accession>
<accession>Q0IY49</accession>
<accession>Q7G3A6</accession>
<name>YIPL_ORYSJ</name>
<proteinExistence type="inferred from homology"/>
<reference key="1">
    <citation type="journal article" date="2003" name="Science">
        <title>In-depth view of structure, activity, and evolution of rice chromosome 10.</title>
        <authorList>
            <person name="Yu Y."/>
            <person name="Rambo T."/>
            <person name="Currie J."/>
            <person name="Saski C."/>
            <person name="Kim H.-R."/>
            <person name="Collura K."/>
            <person name="Thompson S."/>
            <person name="Simmons J."/>
            <person name="Yang T.-J."/>
            <person name="Nah G."/>
            <person name="Patel A.J."/>
            <person name="Thurmond S."/>
            <person name="Henry D."/>
            <person name="Oates R."/>
            <person name="Palmer M."/>
            <person name="Pries G."/>
            <person name="Gibson J."/>
            <person name="Anderson H."/>
            <person name="Paradkar M."/>
            <person name="Crane L."/>
            <person name="Dale J."/>
            <person name="Carver M.B."/>
            <person name="Wood T."/>
            <person name="Frisch D."/>
            <person name="Engler F."/>
            <person name="Soderlund C."/>
            <person name="Palmer L.E."/>
            <person name="Teytelman L."/>
            <person name="Nascimento L."/>
            <person name="De la Bastide M."/>
            <person name="Spiegel L."/>
            <person name="Ware D."/>
            <person name="O'Shaughnessy A."/>
            <person name="Dike S."/>
            <person name="Dedhia N."/>
            <person name="Preston R."/>
            <person name="Huang E."/>
            <person name="Ferraro K."/>
            <person name="Kuit K."/>
            <person name="Miller B."/>
            <person name="Zutavern T."/>
            <person name="Katzenberger F."/>
            <person name="Muller S."/>
            <person name="Balija V."/>
            <person name="Martienssen R.A."/>
            <person name="Stein L."/>
            <person name="Minx P."/>
            <person name="Johnson D."/>
            <person name="Cordum H."/>
            <person name="Mardis E."/>
            <person name="Cheng Z."/>
            <person name="Jiang J."/>
            <person name="Wilson R."/>
            <person name="McCombie W.R."/>
            <person name="Wing R.A."/>
            <person name="Yuan Q."/>
            <person name="Ouyang S."/>
            <person name="Liu J."/>
            <person name="Jones K.M."/>
            <person name="Gansberger K."/>
            <person name="Moffat K."/>
            <person name="Hill J."/>
            <person name="Tsitrin T."/>
            <person name="Overton L."/>
            <person name="Bera J."/>
            <person name="Kim M."/>
            <person name="Jin S."/>
            <person name="Tallon L."/>
            <person name="Ciecko A."/>
            <person name="Pai G."/>
            <person name="Van Aken S."/>
            <person name="Utterback T."/>
            <person name="Reidmuller S."/>
            <person name="Bormann J."/>
            <person name="Feldblyum T."/>
            <person name="Hsiao J."/>
            <person name="Zismann V."/>
            <person name="Blunt S."/>
            <person name="de Vazeille A.R."/>
            <person name="Shaffer T."/>
            <person name="Koo H."/>
            <person name="Suh B."/>
            <person name="Yang Q."/>
            <person name="Haas B."/>
            <person name="Peterson J."/>
            <person name="Pertea M."/>
            <person name="Volfovsky N."/>
            <person name="Wortman J."/>
            <person name="White O."/>
            <person name="Salzberg S.L."/>
            <person name="Fraser C.M."/>
            <person name="Buell C.R."/>
            <person name="Messing J."/>
            <person name="Song R."/>
            <person name="Fuks G."/>
            <person name="Llaca V."/>
            <person name="Kovchak S."/>
            <person name="Young S."/>
            <person name="Bowers J.E."/>
            <person name="Paterson A.H."/>
            <person name="Johns M.A."/>
            <person name="Mao L."/>
            <person name="Pan H."/>
            <person name="Dean R.A."/>
        </authorList>
    </citation>
    <scope>NUCLEOTIDE SEQUENCE [LARGE SCALE GENOMIC DNA]</scope>
    <source>
        <strain>cv. Nipponbare</strain>
    </source>
</reference>
<reference key="2">
    <citation type="journal article" date="2005" name="Nature">
        <title>The map-based sequence of the rice genome.</title>
        <authorList>
            <consortium name="International rice genome sequencing project (IRGSP)"/>
        </authorList>
    </citation>
    <scope>NUCLEOTIDE SEQUENCE [LARGE SCALE GENOMIC DNA]</scope>
    <source>
        <strain>cv. Nipponbare</strain>
    </source>
</reference>
<reference key="3">
    <citation type="journal article" date="2008" name="Nucleic Acids Res.">
        <title>The rice annotation project database (RAP-DB): 2008 update.</title>
        <authorList>
            <consortium name="The rice annotation project (RAP)"/>
        </authorList>
    </citation>
    <scope>GENOME REANNOTATION</scope>
    <source>
        <strain>cv. Nipponbare</strain>
    </source>
</reference>
<reference key="4">
    <citation type="journal article" date="2013" name="Rice">
        <title>Improvement of the Oryza sativa Nipponbare reference genome using next generation sequence and optical map data.</title>
        <authorList>
            <person name="Kawahara Y."/>
            <person name="de la Bastide M."/>
            <person name="Hamilton J.P."/>
            <person name="Kanamori H."/>
            <person name="McCombie W.R."/>
            <person name="Ouyang S."/>
            <person name="Schwartz D.C."/>
            <person name="Tanaka T."/>
            <person name="Wu J."/>
            <person name="Zhou S."/>
            <person name="Childs K.L."/>
            <person name="Davidson R.M."/>
            <person name="Lin H."/>
            <person name="Quesada-Ocampo L."/>
            <person name="Vaillancourt B."/>
            <person name="Sakai H."/>
            <person name="Lee S.S."/>
            <person name="Kim J."/>
            <person name="Numa H."/>
            <person name="Itoh T."/>
            <person name="Buell C.R."/>
            <person name="Matsumoto T."/>
        </authorList>
    </citation>
    <scope>GENOME REANNOTATION</scope>
    <source>
        <strain>cv. Nipponbare</strain>
    </source>
</reference>
<gene>
    <name type="ordered locus">Os10g0369500</name>
    <name type="ordered locus">LOC_Os10g22410</name>
    <name type="ORF">OJ1003C07.11</name>
</gene>
<protein>
    <recommendedName>
        <fullName>Putative yippee-like protein Os10g0369500</fullName>
    </recommendedName>
</protein>
<keyword id="KW-0479">Metal-binding</keyword>
<keyword id="KW-1185">Reference proteome</keyword>
<keyword id="KW-0862">Zinc</keyword>
<comment type="similarity">
    <text evidence="2">Belongs to the yippee family.</text>
</comment>
<comment type="sequence caution" evidence="2">
    <conflict type="erroneous gene model prediction">
        <sequence resource="EMBL-CDS" id="BAF26366"/>
    </conflict>
</comment>
<evidence type="ECO:0000255" key="1">
    <source>
        <dbReference type="PROSITE-ProRule" id="PRU01128"/>
    </source>
</evidence>
<evidence type="ECO:0000305" key="2"/>
<sequence>MGLLFVELLPRHGDGGGPASAVLKCRRCRVDAASADAILSRDFRGRFGRAYLFDHVVNISLGPNEDRYLMTGLHTVKDIYCSCCQQILGWRYEKAYEESEKYKEGKFILEKARMWKEAR</sequence>
<feature type="chain" id="PRO_0000212407" description="Putative yippee-like protein Os10g0369500">
    <location>
        <begin position="1"/>
        <end position="119"/>
    </location>
</feature>
<feature type="domain" description="Yippee" evidence="1">
    <location>
        <begin position="21"/>
        <end position="118"/>
    </location>
</feature>
<feature type="binding site" evidence="1">
    <location>
        <position position="25"/>
    </location>
    <ligand>
        <name>Zn(2+)</name>
        <dbReference type="ChEBI" id="CHEBI:29105"/>
    </ligand>
</feature>
<feature type="binding site" evidence="1">
    <location>
        <position position="28"/>
    </location>
    <ligand>
        <name>Zn(2+)</name>
        <dbReference type="ChEBI" id="CHEBI:29105"/>
    </ligand>
</feature>
<feature type="binding site" evidence="1">
    <location>
        <position position="81"/>
    </location>
    <ligand>
        <name>Zn(2+)</name>
        <dbReference type="ChEBI" id="CHEBI:29105"/>
    </ligand>
</feature>
<feature type="binding site" evidence="1">
    <location>
        <position position="84"/>
    </location>
    <ligand>
        <name>Zn(2+)</name>
        <dbReference type="ChEBI" id="CHEBI:29105"/>
    </ligand>
</feature>
<organism>
    <name type="scientific">Oryza sativa subsp. japonica</name>
    <name type="common">Rice</name>
    <dbReference type="NCBI Taxonomy" id="39947"/>
    <lineage>
        <taxon>Eukaryota</taxon>
        <taxon>Viridiplantae</taxon>
        <taxon>Streptophyta</taxon>
        <taxon>Embryophyta</taxon>
        <taxon>Tracheophyta</taxon>
        <taxon>Spermatophyta</taxon>
        <taxon>Magnoliopsida</taxon>
        <taxon>Liliopsida</taxon>
        <taxon>Poales</taxon>
        <taxon>Poaceae</taxon>
        <taxon>BOP clade</taxon>
        <taxon>Oryzoideae</taxon>
        <taxon>Oryzeae</taxon>
        <taxon>Oryzinae</taxon>
        <taxon>Oryza</taxon>
        <taxon>Oryza sativa</taxon>
    </lineage>
</organism>
<dbReference type="EMBL" id="AC113335">
    <property type="protein sequence ID" value="AAM08831.1"/>
    <property type="molecule type" value="Genomic_DNA"/>
</dbReference>
<dbReference type="EMBL" id="DP000086">
    <property type="protein sequence ID" value="AAP53369.1"/>
    <property type="molecule type" value="Genomic_DNA"/>
</dbReference>
<dbReference type="EMBL" id="AP008216">
    <property type="protein sequence ID" value="BAF26366.1"/>
    <property type="status" value="ALT_SEQ"/>
    <property type="molecule type" value="Genomic_DNA"/>
</dbReference>
<dbReference type="EMBL" id="AP014966">
    <property type="status" value="NOT_ANNOTATED_CDS"/>
    <property type="molecule type" value="Genomic_DNA"/>
</dbReference>
<dbReference type="SMR" id="Q8S5M8"/>
<dbReference type="FunCoup" id="Q8S5M8">
    <property type="interactions" value="87"/>
</dbReference>
<dbReference type="STRING" id="39947.Q8S5M8"/>
<dbReference type="PaxDb" id="39947-Q8S5M8"/>
<dbReference type="GeneID" id="9271275"/>
<dbReference type="KEGG" id="osa:9271275"/>
<dbReference type="eggNOG" id="ENOG502SXNI">
    <property type="taxonomic scope" value="Eukaryota"/>
</dbReference>
<dbReference type="InParanoid" id="Q8S5M8"/>
<dbReference type="OrthoDB" id="6407410at2759"/>
<dbReference type="Proteomes" id="UP000000763">
    <property type="component" value="Chromosome 10"/>
</dbReference>
<dbReference type="Proteomes" id="UP000059680">
    <property type="component" value="Chromosome 10"/>
</dbReference>
<dbReference type="GO" id="GO:0046872">
    <property type="term" value="F:metal ion binding"/>
    <property type="evidence" value="ECO:0007669"/>
    <property type="project" value="UniProtKB-KW"/>
</dbReference>
<dbReference type="InterPro" id="IPR034751">
    <property type="entry name" value="Yippee"/>
</dbReference>
<dbReference type="InterPro" id="IPR004910">
    <property type="entry name" value="Yippee/Mis18/Cereblon"/>
</dbReference>
<dbReference type="InterPro" id="IPR039058">
    <property type="entry name" value="Yippee_fam"/>
</dbReference>
<dbReference type="PANTHER" id="PTHR13848">
    <property type="entry name" value="PROTEIN YIPPEE-LIKE CG15309-RELATED"/>
    <property type="match status" value="1"/>
</dbReference>
<dbReference type="Pfam" id="PF03226">
    <property type="entry name" value="Yippee-Mis18"/>
    <property type="match status" value="1"/>
</dbReference>
<dbReference type="PROSITE" id="PS51792">
    <property type="entry name" value="YIPPEE"/>
    <property type="match status" value="1"/>
</dbReference>